<comment type="function">
    <text evidence="1">Involved in transcription antitermination. Required for transcription of ribosomal RNA (rRNA) genes. Binds specifically to the boxA antiterminator sequence of the ribosomal RNA (rrn) operons.</text>
</comment>
<comment type="similarity">
    <text evidence="1">Belongs to the NusB family.</text>
</comment>
<organism>
    <name type="scientific">Streptococcus pneumoniae (strain Hungary19A-6)</name>
    <dbReference type="NCBI Taxonomy" id="487214"/>
    <lineage>
        <taxon>Bacteria</taxon>
        <taxon>Bacillati</taxon>
        <taxon>Bacillota</taxon>
        <taxon>Bacilli</taxon>
        <taxon>Lactobacillales</taxon>
        <taxon>Streptococcaceae</taxon>
        <taxon>Streptococcus</taxon>
    </lineage>
</organism>
<sequence>MTSPLLESRRQLRKCAFQALMSLEFGTDVETACRFAYTHDREDTDVQLPAFLIDLVSGVQAKKEELDKQITQHLKAGWTIERLTLVERNLLRLGVFEITSFDTPQLVAVNEAIELAKDFSDQKSARFINGLLSQFVTEEQ</sequence>
<keyword id="KW-0694">RNA-binding</keyword>
<keyword id="KW-0804">Transcription</keyword>
<keyword id="KW-0889">Transcription antitermination</keyword>
<keyword id="KW-0805">Transcription regulation</keyword>
<accession>B1I9M4</accession>
<proteinExistence type="inferred from homology"/>
<evidence type="ECO:0000255" key="1">
    <source>
        <dbReference type="HAMAP-Rule" id="MF_00073"/>
    </source>
</evidence>
<name>NUSB_STRPI</name>
<gene>
    <name evidence="1" type="primary">nusB</name>
    <name type="ordered locus">SPH_0539</name>
</gene>
<dbReference type="EMBL" id="CP000936">
    <property type="protein sequence ID" value="ACA36012.1"/>
    <property type="molecule type" value="Genomic_DNA"/>
</dbReference>
<dbReference type="RefSeq" id="WP_000203654.1">
    <property type="nucleotide sequence ID" value="NC_010380.1"/>
</dbReference>
<dbReference type="SMR" id="B1I9M4"/>
<dbReference type="GeneID" id="45652116"/>
<dbReference type="KEGG" id="spv:SPH_0539"/>
<dbReference type="HOGENOM" id="CLU_087843_3_2_9"/>
<dbReference type="Proteomes" id="UP000002163">
    <property type="component" value="Chromosome"/>
</dbReference>
<dbReference type="GO" id="GO:0005829">
    <property type="term" value="C:cytosol"/>
    <property type="evidence" value="ECO:0007669"/>
    <property type="project" value="TreeGrafter"/>
</dbReference>
<dbReference type="GO" id="GO:0003723">
    <property type="term" value="F:RNA binding"/>
    <property type="evidence" value="ECO:0007669"/>
    <property type="project" value="UniProtKB-UniRule"/>
</dbReference>
<dbReference type="GO" id="GO:0006353">
    <property type="term" value="P:DNA-templated transcription termination"/>
    <property type="evidence" value="ECO:0007669"/>
    <property type="project" value="UniProtKB-UniRule"/>
</dbReference>
<dbReference type="GO" id="GO:0031564">
    <property type="term" value="P:transcription antitermination"/>
    <property type="evidence" value="ECO:0007669"/>
    <property type="project" value="UniProtKB-KW"/>
</dbReference>
<dbReference type="FunFam" id="1.10.940.10:FF:000008">
    <property type="entry name" value="Transcription antitermination protein NusB"/>
    <property type="match status" value="1"/>
</dbReference>
<dbReference type="Gene3D" id="1.10.940.10">
    <property type="entry name" value="NusB-like"/>
    <property type="match status" value="1"/>
</dbReference>
<dbReference type="HAMAP" id="MF_00073">
    <property type="entry name" value="NusB"/>
    <property type="match status" value="1"/>
</dbReference>
<dbReference type="InterPro" id="IPR035926">
    <property type="entry name" value="NusB-like_sf"/>
</dbReference>
<dbReference type="InterPro" id="IPR011605">
    <property type="entry name" value="NusB_fam"/>
</dbReference>
<dbReference type="InterPro" id="IPR006027">
    <property type="entry name" value="NusB_RsmB_TIM44"/>
</dbReference>
<dbReference type="NCBIfam" id="TIGR01951">
    <property type="entry name" value="nusB"/>
    <property type="match status" value="1"/>
</dbReference>
<dbReference type="NCBIfam" id="NF001223">
    <property type="entry name" value="PRK00202.1-1"/>
    <property type="match status" value="1"/>
</dbReference>
<dbReference type="PANTHER" id="PTHR11078:SF3">
    <property type="entry name" value="ANTITERMINATION NUSB DOMAIN-CONTAINING PROTEIN"/>
    <property type="match status" value="1"/>
</dbReference>
<dbReference type="PANTHER" id="PTHR11078">
    <property type="entry name" value="N UTILIZATION SUBSTANCE PROTEIN B-RELATED"/>
    <property type="match status" value="1"/>
</dbReference>
<dbReference type="Pfam" id="PF01029">
    <property type="entry name" value="NusB"/>
    <property type="match status" value="1"/>
</dbReference>
<dbReference type="SUPFAM" id="SSF48013">
    <property type="entry name" value="NusB-like"/>
    <property type="match status" value="1"/>
</dbReference>
<reference key="1">
    <citation type="journal article" date="2010" name="Genome Biol.">
        <title>Structure and dynamics of the pan-genome of Streptococcus pneumoniae and closely related species.</title>
        <authorList>
            <person name="Donati C."/>
            <person name="Hiller N.L."/>
            <person name="Tettelin H."/>
            <person name="Muzzi A."/>
            <person name="Croucher N.J."/>
            <person name="Angiuoli S.V."/>
            <person name="Oggioni M."/>
            <person name="Dunning Hotopp J.C."/>
            <person name="Hu F.Z."/>
            <person name="Riley D.R."/>
            <person name="Covacci A."/>
            <person name="Mitchell T.J."/>
            <person name="Bentley S.D."/>
            <person name="Kilian M."/>
            <person name="Ehrlich G.D."/>
            <person name="Rappuoli R."/>
            <person name="Moxon E.R."/>
            <person name="Masignani V."/>
        </authorList>
    </citation>
    <scope>NUCLEOTIDE SEQUENCE [LARGE SCALE GENOMIC DNA]</scope>
    <source>
        <strain>Hungary19A-6</strain>
    </source>
</reference>
<feature type="chain" id="PRO_1000092593" description="Transcription antitermination protein NusB">
    <location>
        <begin position="1"/>
        <end position="140"/>
    </location>
</feature>
<protein>
    <recommendedName>
        <fullName evidence="1">Transcription antitermination protein NusB</fullName>
    </recommendedName>
    <alternativeName>
        <fullName evidence="1">Antitermination factor NusB</fullName>
    </alternativeName>
</protein>